<reference key="1">
    <citation type="journal article" date="2002" name="Nature">
        <title>Sequence and analysis of chromosome 2 of Dictyostelium discoideum.</title>
        <authorList>
            <person name="Gloeckner G."/>
            <person name="Eichinger L."/>
            <person name="Szafranski K."/>
            <person name="Pachebat J.A."/>
            <person name="Bankier A.T."/>
            <person name="Dear P.H."/>
            <person name="Lehmann R."/>
            <person name="Baumgart C."/>
            <person name="Parra G."/>
            <person name="Abril J.F."/>
            <person name="Guigo R."/>
            <person name="Kumpf K."/>
            <person name="Tunggal B."/>
            <person name="Cox E.C."/>
            <person name="Quail M.A."/>
            <person name="Platzer M."/>
            <person name="Rosenthal A."/>
            <person name="Noegel A.A."/>
        </authorList>
    </citation>
    <scope>NUCLEOTIDE SEQUENCE [LARGE SCALE GENOMIC DNA]</scope>
    <source>
        <strain>AX4</strain>
    </source>
</reference>
<reference key="2">
    <citation type="journal article" date="2005" name="Nature">
        <title>The genome of the social amoeba Dictyostelium discoideum.</title>
        <authorList>
            <person name="Eichinger L."/>
            <person name="Pachebat J.A."/>
            <person name="Gloeckner G."/>
            <person name="Rajandream M.A."/>
            <person name="Sucgang R."/>
            <person name="Berriman M."/>
            <person name="Song J."/>
            <person name="Olsen R."/>
            <person name="Szafranski K."/>
            <person name="Xu Q."/>
            <person name="Tunggal B."/>
            <person name="Kummerfeld S."/>
            <person name="Madera M."/>
            <person name="Konfortov B.A."/>
            <person name="Rivero F."/>
            <person name="Bankier A.T."/>
            <person name="Lehmann R."/>
            <person name="Hamlin N."/>
            <person name="Davies R."/>
            <person name="Gaudet P."/>
            <person name="Fey P."/>
            <person name="Pilcher K."/>
            <person name="Chen G."/>
            <person name="Saunders D."/>
            <person name="Sodergren E.J."/>
            <person name="Davis P."/>
            <person name="Kerhornou A."/>
            <person name="Nie X."/>
            <person name="Hall N."/>
            <person name="Anjard C."/>
            <person name="Hemphill L."/>
            <person name="Bason N."/>
            <person name="Farbrother P."/>
            <person name="Desany B."/>
            <person name="Just E."/>
            <person name="Morio T."/>
            <person name="Rost R."/>
            <person name="Churcher C.M."/>
            <person name="Cooper J."/>
            <person name="Haydock S."/>
            <person name="van Driessche N."/>
            <person name="Cronin A."/>
            <person name="Goodhead I."/>
            <person name="Muzny D.M."/>
            <person name="Mourier T."/>
            <person name="Pain A."/>
            <person name="Lu M."/>
            <person name="Harper D."/>
            <person name="Lindsay R."/>
            <person name="Hauser H."/>
            <person name="James K.D."/>
            <person name="Quiles M."/>
            <person name="Madan Babu M."/>
            <person name="Saito T."/>
            <person name="Buchrieser C."/>
            <person name="Wardroper A."/>
            <person name="Felder M."/>
            <person name="Thangavelu M."/>
            <person name="Johnson D."/>
            <person name="Knights A."/>
            <person name="Loulseged H."/>
            <person name="Mungall K.L."/>
            <person name="Oliver K."/>
            <person name="Price C."/>
            <person name="Quail M.A."/>
            <person name="Urushihara H."/>
            <person name="Hernandez J."/>
            <person name="Rabbinowitsch E."/>
            <person name="Steffen D."/>
            <person name="Sanders M."/>
            <person name="Ma J."/>
            <person name="Kohara Y."/>
            <person name="Sharp S."/>
            <person name="Simmonds M.N."/>
            <person name="Spiegler S."/>
            <person name="Tivey A."/>
            <person name="Sugano S."/>
            <person name="White B."/>
            <person name="Walker D."/>
            <person name="Woodward J.R."/>
            <person name="Winckler T."/>
            <person name="Tanaka Y."/>
            <person name="Shaulsky G."/>
            <person name="Schleicher M."/>
            <person name="Weinstock G.M."/>
            <person name="Rosenthal A."/>
            <person name="Cox E.C."/>
            <person name="Chisholm R.L."/>
            <person name="Gibbs R.A."/>
            <person name="Loomis W.F."/>
            <person name="Platzer M."/>
            <person name="Kay R.R."/>
            <person name="Williams J.G."/>
            <person name="Dear P.H."/>
            <person name="Noegel A.A."/>
            <person name="Barrell B.G."/>
            <person name="Kuspa A."/>
        </authorList>
    </citation>
    <scope>NUCLEOTIDE SEQUENCE [LARGE SCALE GENOMIC DNA]</scope>
    <source>
        <strain>AX4</strain>
    </source>
</reference>
<proteinExistence type="predicted"/>
<protein>
    <recommendedName>
        <fullName>Uncharacterized protein DDB_G0276477</fullName>
    </recommendedName>
</protein>
<dbReference type="EMBL" id="AAFI02000015">
    <property type="protein sequence ID" value="EAL69192.1"/>
    <property type="molecule type" value="Genomic_DNA"/>
</dbReference>
<dbReference type="RefSeq" id="XP_643171.1">
    <property type="nucleotide sequence ID" value="XM_638079.1"/>
</dbReference>
<dbReference type="PaxDb" id="44689-DDB0233225"/>
<dbReference type="EnsemblProtists" id="EAL69192">
    <property type="protein sequence ID" value="EAL69192"/>
    <property type="gene ID" value="DDB_G0276477"/>
</dbReference>
<dbReference type="GeneID" id="8620579"/>
<dbReference type="KEGG" id="ddi:DDB_G0276477"/>
<dbReference type="dictyBase" id="DDB_G0276477"/>
<dbReference type="HOGENOM" id="CLU_2578864_0_0_1"/>
<dbReference type="InParanoid" id="Q86HB7"/>
<dbReference type="PRO" id="PR:Q86HB7"/>
<dbReference type="Proteomes" id="UP000002195">
    <property type="component" value="Chromosome 2"/>
</dbReference>
<gene>
    <name type="ORF">DDB_G0276477</name>
</gene>
<name>Y3225_DICDI</name>
<accession>Q86HB7</accession>
<accession>Q551G3</accession>
<feature type="chain" id="PRO_0000348100" description="Uncharacterized protein DDB_G0276477">
    <location>
        <begin position="1"/>
        <end position="81"/>
    </location>
</feature>
<organism>
    <name type="scientific">Dictyostelium discoideum</name>
    <name type="common">Social amoeba</name>
    <dbReference type="NCBI Taxonomy" id="44689"/>
    <lineage>
        <taxon>Eukaryota</taxon>
        <taxon>Amoebozoa</taxon>
        <taxon>Evosea</taxon>
        <taxon>Eumycetozoa</taxon>
        <taxon>Dictyostelia</taxon>
        <taxon>Dictyosteliales</taxon>
        <taxon>Dictyosteliaceae</taxon>
        <taxon>Dictyostelium</taxon>
    </lineage>
</organism>
<sequence>MGHHHHYAYTTTTPYIMPGVPPPVVYGAPPPMMVVPPPMGIVQPQVFVQGMVPPPVVYGAPPPMMGVPPPMGQPFYPPSYY</sequence>
<keyword id="KW-1185">Reference proteome</keyword>